<keyword id="KW-0997">Cell inner membrane</keyword>
<keyword id="KW-1003">Cell membrane</keyword>
<keyword id="KW-0472">Membrane</keyword>
<keyword id="KW-0511">Multifunctional enzyme</keyword>
<keyword id="KW-0520">NAD</keyword>
<keyword id="KW-0874">Quinone</keyword>
<keyword id="KW-1185">Reference proteome</keyword>
<keyword id="KW-1278">Translocase</keyword>
<keyword id="KW-0813">Transport</keyword>
<keyword id="KW-0830">Ubiquinone</keyword>
<protein>
    <recommendedName>
        <fullName evidence="1">NADH-quinone oxidoreductase subunit C/D</fullName>
        <ecNumber evidence="1">7.1.1.-</ecNumber>
    </recommendedName>
    <alternativeName>
        <fullName evidence="1">NADH dehydrogenase I subunit C/D</fullName>
    </alternativeName>
    <alternativeName>
        <fullName evidence="1">NDH-1 subunit C/D</fullName>
    </alternativeName>
</protein>
<name>NUOCD_SHIB3</name>
<sequence length="600" mass="68707">MVNNMTDLTAQEPAWQTRDHLDDPVIGELRNRFGPDAFTVQATRTGVPVVWIKREQLLEVGDFLKKLPKPYVMLFDLHGMDERLRTHREGLPAADFSVFYHLISIDRNRDIMLKVALAENDLHVPTFTKLFPNANWYERETWDLFGITFDGHPNLRRIMMPQTWKGHPLRKDYPARATEFSPFELTKAKQDLEMEALTFKPEEWGMKRGTENEDFMFLNLGPNHPSAHGAFRIVLQLDGEEIVDCVPDIGYHHRGAEKMGERQSWHSYIPYTDRIEYLGGCVNEMPYVLAVEKLAGITVPDRVNVIRVMLSELFRINSHLLYISTFIQDVGAMTPVFFAFTDRQKIYDLVEAITGFRMHPAWFRIGGVAHDLPRGWDRLLREFLDWMPKRLASYEKAALQNTILKGRSQGVAAYGAKEALEWGTTGAGLRATGIDFDVRKARPYSGYENFDFEIPVGGGVSDCYTRVMLKVEELRQSLRILEQCLNNMPEGPFKADHPLTTPPPKERTLQHIETLITHFLQVSWGPVMPANESFQMIEATKGINSYYLTSDGSTISYRTRIRTPSYAHLQQIPAAIRGSLVSDLIVYLGSIDFVMSDVDR</sequence>
<evidence type="ECO:0000255" key="1">
    <source>
        <dbReference type="HAMAP-Rule" id="MF_01359"/>
    </source>
</evidence>
<proteinExistence type="inferred from homology"/>
<feature type="chain" id="PRO_0000358695" description="NADH-quinone oxidoreductase subunit C/D">
    <location>
        <begin position="1"/>
        <end position="600"/>
    </location>
</feature>
<feature type="region of interest" description="NADH dehydrogenase I subunit C" evidence="1">
    <location>
        <begin position="1"/>
        <end position="190"/>
    </location>
</feature>
<feature type="region of interest" description="NADH dehydrogenase I subunit D" evidence="1">
    <location>
        <begin position="214"/>
        <end position="600"/>
    </location>
</feature>
<reference key="1">
    <citation type="submission" date="2008-05" db="EMBL/GenBank/DDBJ databases">
        <title>Complete sequence of Shigella boydii serotype 18 strain BS512.</title>
        <authorList>
            <person name="Rasko D.A."/>
            <person name="Rosovitz M."/>
            <person name="Maurelli A.T."/>
            <person name="Myers G."/>
            <person name="Seshadri R."/>
            <person name="Cer R."/>
            <person name="Jiang L."/>
            <person name="Ravel J."/>
            <person name="Sebastian Y."/>
        </authorList>
    </citation>
    <scope>NUCLEOTIDE SEQUENCE [LARGE SCALE GENOMIC DNA]</scope>
    <source>
        <strain>CDC 3083-94 / BS512</strain>
    </source>
</reference>
<gene>
    <name evidence="1" type="primary">nuoC</name>
    <name evidence="1" type="synonym">nuoCD</name>
    <name evidence="1" type="synonym">nuoD</name>
    <name type="ordered locus">SbBS512_E2662</name>
</gene>
<dbReference type="EC" id="7.1.1.-" evidence="1"/>
<dbReference type="EMBL" id="CP001063">
    <property type="protein sequence ID" value="ACD07839.1"/>
    <property type="molecule type" value="Genomic_DNA"/>
</dbReference>
<dbReference type="SMR" id="B2TW67"/>
<dbReference type="STRING" id="344609.SbBS512_E2662"/>
<dbReference type="KEGG" id="sbc:SbBS512_E2662"/>
<dbReference type="HOGENOM" id="CLU_015134_3_2_6"/>
<dbReference type="Proteomes" id="UP000001030">
    <property type="component" value="Chromosome"/>
</dbReference>
<dbReference type="GO" id="GO:0030964">
    <property type="term" value="C:NADH dehydrogenase complex"/>
    <property type="evidence" value="ECO:0007669"/>
    <property type="project" value="InterPro"/>
</dbReference>
<dbReference type="GO" id="GO:0005886">
    <property type="term" value="C:plasma membrane"/>
    <property type="evidence" value="ECO:0007669"/>
    <property type="project" value="UniProtKB-SubCell"/>
</dbReference>
<dbReference type="GO" id="GO:0051287">
    <property type="term" value="F:NAD binding"/>
    <property type="evidence" value="ECO:0007669"/>
    <property type="project" value="InterPro"/>
</dbReference>
<dbReference type="GO" id="GO:0008137">
    <property type="term" value="F:NADH dehydrogenase (ubiquinone) activity"/>
    <property type="evidence" value="ECO:0007669"/>
    <property type="project" value="InterPro"/>
</dbReference>
<dbReference type="GO" id="GO:0050136">
    <property type="term" value="F:NADH:ubiquinone reductase (non-electrogenic) activity"/>
    <property type="evidence" value="ECO:0007669"/>
    <property type="project" value="UniProtKB-UniRule"/>
</dbReference>
<dbReference type="GO" id="GO:0048038">
    <property type="term" value="F:quinone binding"/>
    <property type="evidence" value="ECO:0007669"/>
    <property type="project" value="UniProtKB-KW"/>
</dbReference>
<dbReference type="FunFam" id="1.10.645.10:FF:000001">
    <property type="entry name" value="NADH-quinone oxidoreductase subunit C/D"/>
    <property type="match status" value="1"/>
</dbReference>
<dbReference type="FunFam" id="3.30.460.80:FF:000001">
    <property type="entry name" value="NADH-quinone oxidoreductase subunit C/D"/>
    <property type="match status" value="1"/>
</dbReference>
<dbReference type="Gene3D" id="1.10.645.10">
    <property type="entry name" value="Cytochrome-c3 Hydrogenase, chain B"/>
    <property type="match status" value="1"/>
</dbReference>
<dbReference type="Gene3D" id="3.30.460.80">
    <property type="entry name" value="NADH:ubiquinone oxidoreductase, 30kDa subunit"/>
    <property type="match status" value="1"/>
</dbReference>
<dbReference type="HAMAP" id="MF_01357">
    <property type="entry name" value="NDH1_NuoC"/>
    <property type="match status" value="1"/>
</dbReference>
<dbReference type="HAMAP" id="MF_01359">
    <property type="entry name" value="NDH1_NuoCD_1"/>
    <property type="match status" value="1"/>
</dbReference>
<dbReference type="HAMAP" id="MF_01358">
    <property type="entry name" value="NDH1_NuoD"/>
    <property type="match status" value="1"/>
</dbReference>
<dbReference type="InterPro" id="IPR010218">
    <property type="entry name" value="NADH_DH_suC"/>
</dbReference>
<dbReference type="InterPro" id="IPR023062">
    <property type="entry name" value="NADH_DH_suCD"/>
</dbReference>
<dbReference type="InterPro" id="IPR001135">
    <property type="entry name" value="NADH_Q_OxRdtase_suD"/>
</dbReference>
<dbReference type="InterPro" id="IPR037232">
    <property type="entry name" value="NADH_quin_OxRdtase_su_C/D-like"/>
</dbReference>
<dbReference type="InterPro" id="IPR001268">
    <property type="entry name" value="NADH_UbQ_OxRdtase_30kDa_su"/>
</dbReference>
<dbReference type="InterPro" id="IPR014029">
    <property type="entry name" value="NADH_UbQ_OxRdtase_49kDa_CS"/>
</dbReference>
<dbReference type="InterPro" id="IPR020396">
    <property type="entry name" value="NADH_UbQ_OxRdtase_CS"/>
</dbReference>
<dbReference type="InterPro" id="IPR022885">
    <property type="entry name" value="NDH1_su_D/H"/>
</dbReference>
<dbReference type="InterPro" id="IPR029014">
    <property type="entry name" value="NiFe-Hase_large"/>
</dbReference>
<dbReference type="NCBIfam" id="TIGR01961">
    <property type="entry name" value="NuoC_fam"/>
    <property type="match status" value="1"/>
</dbReference>
<dbReference type="NCBIfam" id="TIGR01962">
    <property type="entry name" value="NuoD"/>
    <property type="match status" value="1"/>
</dbReference>
<dbReference type="NCBIfam" id="NF004739">
    <property type="entry name" value="PRK06075.1"/>
    <property type="match status" value="1"/>
</dbReference>
<dbReference type="NCBIfam" id="NF008728">
    <property type="entry name" value="PRK11742.1"/>
    <property type="match status" value="1"/>
</dbReference>
<dbReference type="PANTHER" id="PTHR11993:SF45">
    <property type="entry name" value="NADH-QUINONE OXIDOREDUCTASE SUBUNIT C_D"/>
    <property type="match status" value="1"/>
</dbReference>
<dbReference type="PANTHER" id="PTHR11993">
    <property type="entry name" value="NADH-UBIQUINONE OXIDOREDUCTASE 49 KDA SUBUNIT"/>
    <property type="match status" value="1"/>
</dbReference>
<dbReference type="Pfam" id="PF00329">
    <property type="entry name" value="Complex1_30kDa"/>
    <property type="match status" value="1"/>
</dbReference>
<dbReference type="Pfam" id="PF00346">
    <property type="entry name" value="Complex1_49kDa"/>
    <property type="match status" value="1"/>
</dbReference>
<dbReference type="SUPFAM" id="SSF56762">
    <property type="entry name" value="HydB/Nqo4-like"/>
    <property type="match status" value="1"/>
</dbReference>
<dbReference type="SUPFAM" id="SSF143243">
    <property type="entry name" value="Nqo5-like"/>
    <property type="match status" value="1"/>
</dbReference>
<dbReference type="PROSITE" id="PS00542">
    <property type="entry name" value="COMPLEX1_30K"/>
    <property type="match status" value="1"/>
</dbReference>
<dbReference type="PROSITE" id="PS00535">
    <property type="entry name" value="COMPLEX1_49K"/>
    <property type="match status" value="1"/>
</dbReference>
<organism>
    <name type="scientific">Shigella boydii serotype 18 (strain CDC 3083-94 / BS512)</name>
    <dbReference type="NCBI Taxonomy" id="344609"/>
    <lineage>
        <taxon>Bacteria</taxon>
        <taxon>Pseudomonadati</taxon>
        <taxon>Pseudomonadota</taxon>
        <taxon>Gammaproteobacteria</taxon>
        <taxon>Enterobacterales</taxon>
        <taxon>Enterobacteriaceae</taxon>
        <taxon>Shigella</taxon>
    </lineage>
</organism>
<accession>B2TW67</accession>
<comment type="function">
    <text evidence="1">NDH-1 shuttles electrons from NADH, via FMN and iron-sulfur (Fe-S) centers, to quinones in the respiratory chain. The immediate electron acceptor for the enzyme in this species is believed to be ubiquinone. Couples the redox reaction to proton translocation (for every two electrons transferred, four hydrogen ions are translocated across the cytoplasmic membrane), and thus conserves the redox energy in a proton gradient.</text>
</comment>
<comment type="catalytic activity">
    <reaction evidence="1">
        <text>a quinone + NADH + 5 H(+)(in) = a quinol + NAD(+) + 4 H(+)(out)</text>
        <dbReference type="Rhea" id="RHEA:57888"/>
        <dbReference type="ChEBI" id="CHEBI:15378"/>
        <dbReference type="ChEBI" id="CHEBI:24646"/>
        <dbReference type="ChEBI" id="CHEBI:57540"/>
        <dbReference type="ChEBI" id="CHEBI:57945"/>
        <dbReference type="ChEBI" id="CHEBI:132124"/>
    </reaction>
</comment>
<comment type="subunit">
    <text evidence="1">NDH-1 is composed of 13 different subunits. Subunits NuoB, CD, E, F, and G constitute the peripheral sector of the complex.</text>
</comment>
<comment type="subcellular location">
    <subcellularLocation>
        <location evidence="1">Cell inner membrane</location>
        <topology evidence="1">Peripheral membrane protein</topology>
        <orientation evidence="1">Cytoplasmic side</orientation>
    </subcellularLocation>
</comment>
<comment type="similarity">
    <text evidence="1">In the N-terminal section; belongs to the complex I 30 kDa subunit family.</text>
</comment>
<comment type="similarity">
    <text evidence="1">In the C-terminal section; belongs to the complex I 49 kDa subunit family.</text>
</comment>